<protein>
    <recommendedName>
        <fullName evidence="1">Large ribosomal subunit protein bL32</fullName>
    </recommendedName>
    <alternativeName>
        <fullName evidence="3">50S ribosomal protein L32</fullName>
    </alternativeName>
</protein>
<gene>
    <name evidence="1" type="primary">rpmF</name>
    <name type="ordered locus">BMEA_A1825</name>
</gene>
<reference key="1">
    <citation type="submission" date="2009-03" db="EMBL/GenBank/DDBJ databases">
        <title>Brucella melitensis ATCC 23457 whole genome shotgun sequencing project.</title>
        <authorList>
            <person name="Setubal J.C."/>
            <person name="Boyle S."/>
            <person name="Crasta O.R."/>
            <person name="Gillespie J.J."/>
            <person name="Kenyon R.W."/>
            <person name="Lu J."/>
            <person name="Mane S."/>
            <person name="Nagrani S."/>
            <person name="Shallom J.M."/>
            <person name="Shallom S."/>
            <person name="Shukla M."/>
            <person name="Snyder E.E."/>
            <person name="Sobral B.W."/>
            <person name="Wattam A.R."/>
            <person name="Will R."/>
            <person name="Williams K."/>
            <person name="Yoo H."/>
            <person name="Munk C."/>
            <person name="Tapia R."/>
            <person name="Han C."/>
            <person name="Detter J.C."/>
            <person name="Bruce D."/>
            <person name="Brettin T.S."/>
        </authorList>
    </citation>
    <scope>NUCLEOTIDE SEQUENCE [LARGE SCALE GENOMIC DNA]</scope>
    <source>
        <strain>ATCC 23457</strain>
    </source>
</reference>
<dbReference type="EMBL" id="CP001488">
    <property type="protein sequence ID" value="ACO01501.1"/>
    <property type="molecule type" value="Genomic_DNA"/>
</dbReference>
<dbReference type="RefSeq" id="WP_002964856.1">
    <property type="nucleotide sequence ID" value="NC_012441.1"/>
</dbReference>
<dbReference type="SMR" id="C0RF29"/>
<dbReference type="GeneID" id="97533091"/>
<dbReference type="KEGG" id="bmi:BMEA_A1825"/>
<dbReference type="HOGENOM" id="CLU_129084_2_2_5"/>
<dbReference type="Proteomes" id="UP000001748">
    <property type="component" value="Chromosome I"/>
</dbReference>
<dbReference type="GO" id="GO:0015934">
    <property type="term" value="C:large ribosomal subunit"/>
    <property type="evidence" value="ECO:0007669"/>
    <property type="project" value="InterPro"/>
</dbReference>
<dbReference type="GO" id="GO:0003735">
    <property type="term" value="F:structural constituent of ribosome"/>
    <property type="evidence" value="ECO:0007669"/>
    <property type="project" value="InterPro"/>
</dbReference>
<dbReference type="GO" id="GO:0006412">
    <property type="term" value="P:translation"/>
    <property type="evidence" value="ECO:0007669"/>
    <property type="project" value="UniProtKB-UniRule"/>
</dbReference>
<dbReference type="Gene3D" id="1.20.5.640">
    <property type="entry name" value="Single helix bin"/>
    <property type="match status" value="1"/>
</dbReference>
<dbReference type="HAMAP" id="MF_00340">
    <property type="entry name" value="Ribosomal_bL32"/>
    <property type="match status" value="1"/>
</dbReference>
<dbReference type="InterPro" id="IPR002677">
    <property type="entry name" value="Ribosomal_bL32"/>
</dbReference>
<dbReference type="InterPro" id="IPR044957">
    <property type="entry name" value="Ribosomal_bL32_bact"/>
</dbReference>
<dbReference type="InterPro" id="IPR011332">
    <property type="entry name" value="Ribosomal_zn-bd"/>
</dbReference>
<dbReference type="NCBIfam" id="TIGR01031">
    <property type="entry name" value="rpmF_bact"/>
    <property type="match status" value="1"/>
</dbReference>
<dbReference type="PANTHER" id="PTHR35534">
    <property type="entry name" value="50S RIBOSOMAL PROTEIN L32"/>
    <property type="match status" value="1"/>
</dbReference>
<dbReference type="PANTHER" id="PTHR35534:SF1">
    <property type="entry name" value="LARGE RIBOSOMAL SUBUNIT PROTEIN BL32"/>
    <property type="match status" value="1"/>
</dbReference>
<dbReference type="Pfam" id="PF01783">
    <property type="entry name" value="Ribosomal_L32p"/>
    <property type="match status" value="1"/>
</dbReference>
<dbReference type="SUPFAM" id="SSF57829">
    <property type="entry name" value="Zn-binding ribosomal proteins"/>
    <property type="match status" value="1"/>
</dbReference>
<organism>
    <name type="scientific">Brucella melitensis biotype 2 (strain ATCC 23457)</name>
    <dbReference type="NCBI Taxonomy" id="546272"/>
    <lineage>
        <taxon>Bacteria</taxon>
        <taxon>Pseudomonadati</taxon>
        <taxon>Pseudomonadota</taxon>
        <taxon>Alphaproteobacteria</taxon>
        <taxon>Hyphomicrobiales</taxon>
        <taxon>Brucellaceae</taxon>
        <taxon>Brucella/Ochrobactrum group</taxon>
        <taxon>Brucella</taxon>
    </lineage>
</organism>
<comment type="similarity">
    <text evidence="1">Belongs to the bacterial ribosomal protein bL32 family.</text>
</comment>
<sequence length="59" mass="6790">MAVPKRKTSPSRRGMRRSADALKAPTYVEDKNSGELRRPHHIDLKSGMYRGRQVLEPKE</sequence>
<accession>C0RF29</accession>
<evidence type="ECO:0000255" key="1">
    <source>
        <dbReference type="HAMAP-Rule" id="MF_00340"/>
    </source>
</evidence>
<evidence type="ECO:0000256" key="2">
    <source>
        <dbReference type="SAM" id="MobiDB-lite"/>
    </source>
</evidence>
<evidence type="ECO:0000305" key="3"/>
<name>RL32_BRUMB</name>
<feature type="chain" id="PRO_1000195963" description="Large ribosomal subunit protein bL32">
    <location>
        <begin position="1"/>
        <end position="59"/>
    </location>
</feature>
<feature type="region of interest" description="Disordered" evidence="2">
    <location>
        <begin position="1"/>
        <end position="59"/>
    </location>
</feature>
<feature type="compositionally biased region" description="Basic residues" evidence="2">
    <location>
        <begin position="1"/>
        <end position="16"/>
    </location>
</feature>
<feature type="compositionally biased region" description="Basic and acidic residues" evidence="2">
    <location>
        <begin position="28"/>
        <end position="44"/>
    </location>
</feature>
<keyword id="KW-0687">Ribonucleoprotein</keyword>
<keyword id="KW-0689">Ribosomal protein</keyword>
<proteinExistence type="inferred from homology"/>